<keyword id="KW-0966">Cell projection</keyword>
<keyword id="KW-0175">Coiled coil</keyword>
<keyword id="KW-0963">Cytoplasm</keyword>
<keyword id="KW-0221">Differentiation</keyword>
<keyword id="KW-0268">Exocytosis</keyword>
<keyword id="KW-0467">Mast cell degranulation</keyword>
<keyword id="KW-0524">Neurogenesis</keyword>
<keyword id="KW-0532">Neurotransmitter transport</keyword>
<keyword id="KW-0539">Nucleus</keyword>
<keyword id="KW-0597">Phosphoprotein</keyword>
<keyword id="KW-1267">Proteomics identification</keyword>
<keyword id="KW-1185">Reference proteome</keyword>
<keyword id="KW-0770">Synapse</keyword>
<keyword id="KW-0813">Transport</keyword>
<accession>Q6PUV4</accession>
<accession>B2RAG2</accession>
<accession>O09056</accession>
<accession>Q13329</accession>
<accession>Q28184</accession>
<accession>Q52M15</accession>
<accession>Q64386</accession>
<sequence>MDFVMKQALGGATKDMGKMLGGEEEKDPDAQKKEEERQEALRQQEEERKAKHARMEAEREKVRQQIRDKYGLKKKEEKEAEEKAALEQPCEGSLTRPKKAIPAGCGDEEEEEEESILDTVLKYLPGPLQDMFKK</sequence>
<dbReference type="EMBL" id="U35100">
    <property type="protein sequence ID" value="AAC50229.1"/>
    <property type="molecule type" value="mRNA"/>
</dbReference>
<dbReference type="EMBL" id="AK314177">
    <property type="protein sequence ID" value="BAG36859.1"/>
    <property type="molecule type" value="mRNA"/>
</dbReference>
<dbReference type="EMBL" id="BC093706">
    <property type="protein sequence ID" value="AAH93706.1"/>
    <property type="molecule type" value="mRNA"/>
</dbReference>
<dbReference type="EMBL" id="BC112287">
    <property type="protein sequence ID" value="AAI12288.1"/>
    <property type="molecule type" value="mRNA"/>
</dbReference>
<dbReference type="EMBL" id="AY576870">
    <property type="protein sequence ID" value="AAS93622.1"/>
    <property type="molecule type" value="mRNA"/>
</dbReference>
<dbReference type="EMBL" id="BN000499">
    <property type="protein sequence ID" value="CAG26663.1"/>
    <property type="molecule type" value="mRNA"/>
</dbReference>
<dbReference type="EMBL" id="BN000500">
    <property type="protein sequence ID" value="CAG26664.1"/>
    <property type="molecule type" value="mRNA"/>
</dbReference>
<dbReference type="CCDS" id="CCDS4396.1"/>
<dbReference type="PIR" id="E57233">
    <property type="entry name" value="E57233"/>
</dbReference>
<dbReference type="RefSeq" id="NP_001008221.1">
    <property type="nucleotide sequence ID" value="NM_001008220.2"/>
</dbReference>
<dbReference type="RefSeq" id="NP_006641.1">
    <property type="nucleotide sequence ID" value="NM_006650.4"/>
</dbReference>
<dbReference type="RefSeq" id="XP_005265855.1">
    <property type="nucleotide sequence ID" value="XM_005265798.2"/>
</dbReference>
<dbReference type="RefSeq" id="XP_005265856.1">
    <property type="nucleotide sequence ID" value="XM_005265799.2"/>
</dbReference>
<dbReference type="RefSeq" id="XP_011532721.1">
    <property type="nucleotide sequence ID" value="XM_011534419.2"/>
</dbReference>
<dbReference type="RefSeq" id="XP_016864453.1">
    <property type="nucleotide sequence ID" value="XM_017008964.2"/>
</dbReference>
<dbReference type="RefSeq" id="XP_047272606.1">
    <property type="nucleotide sequence ID" value="XM_047416650.1"/>
</dbReference>
<dbReference type="RefSeq" id="XP_047272607.1">
    <property type="nucleotide sequence ID" value="XM_047416651.1"/>
</dbReference>
<dbReference type="RefSeq" id="XP_054207449.1">
    <property type="nucleotide sequence ID" value="XM_054351474.1"/>
</dbReference>
<dbReference type="RefSeq" id="XP_054207450.1">
    <property type="nucleotide sequence ID" value="XM_054351475.1"/>
</dbReference>
<dbReference type="RefSeq" id="XP_054207451.1">
    <property type="nucleotide sequence ID" value="XM_054351476.1"/>
</dbReference>
<dbReference type="RefSeq" id="XP_054207452.1">
    <property type="nucleotide sequence ID" value="XM_054351477.1"/>
</dbReference>
<dbReference type="RefSeq" id="XP_054207453.1">
    <property type="nucleotide sequence ID" value="XM_054351478.1"/>
</dbReference>
<dbReference type="RefSeq" id="XP_054207454.1">
    <property type="nucleotide sequence ID" value="XM_054351479.1"/>
</dbReference>
<dbReference type="SMR" id="Q6PUV4"/>
<dbReference type="BioGRID" id="116027">
    <property type="interactions" value="25"/>
</dbReference>
<dbReference type="CORUM" id="Q6PUV4"/>
<dbReference type="FunCoup" id="Q6PUV4">
    <property type="interactions" value="303"/>
</dbReference>
<dbReference type="IntAct" id="Q6PUV4">
    <property type="interactions" value="20"/>
</dbReference>
<dbReference type="MINT" id="Q6PUV4"/>
<dbReference type="STRING" id="9606.ENSP00000352544"/>
<dbReference type="iPTMnet" id="Q6PUV4"/>
<dbReference type="PhosphoSitePlus" id="Q6PUV4"/>
<dbReference type="BioMuta" id="CPLX2"/>
<dbReference type="DMDM" id="51316998"/>
<dbReference type="jPOST" id="Q6PUV4"/>
<dbReference type="MassIVE" id="Q6PUV4"/>
<dbReference type="PaxDb" id="9606-ENSP00000352544"/>
<dbReference type="PeptideAtlas" id="Q6PUV4"/>
<dbReference type="ProteomicsDB" id="67260"/>
<dbReference type="TopDownProteomics" id="Q6PUV4"/>
<dbReference type="Antibodypedia" id="45968">
    <property type="antibodies" value="174 antibodies from 27 providers"/>
</dbReference>
<dbReference type="DNASU" id="10814"/>
<dbReference type="Ensembl" id="ENST00000359546.8">
    <property type="protein sequence ID" value="ENSP00000352544.4"/>
    <property type="gene ID" value="ENSG00000145920.15"/>
</dbReference>
<dbReference type="Ensembl" id="ENST00000393745.8">
    <property type="protein sequence ID" value="ENSP00000377346.3"/>
    <property type="gene ID" value="ENSG00000145920.15"/>
</dbReference>
<dbReference type="Ensembl" id="ENST00000515094.1">
    <property type="protein sequence ID" value="ENSP00000421825.1"/>
    <property type="gene ID" value="ENSG00000145920.15"/>
</dbReference>
<dbReference type="GeneID" id="10814"/>
<dbReference type="KEGG" id="hsa:10814"/>
<dbReference type="MANE-Select" id="ENST00000393745.8">
    <property type="protein sequence ID" value="ENSP00000377346.3"/>
    <property type="RefSeq nucleotide sequence ID" value="NM_001008220.2"/>
    <property type="RefSeq protein sequence ID" value="NP_001008221.1"/>
</dbReference>
<dbReference type="UCSC" id="uc003mde.2">
    <property type="organism name" value="human"/>
</dbReference>
<dbReference type="AGR" id="HGNC:2310"/>
<dbReference type="CTD" id="10814"/>
<dbReference type="DisGeNET" id="10814"/>
<dbReference type="GeneCards" id="CPLX2"/>
<dbReference type="HGNC" id="HGNC:2310">
    <property type="gene designation" value="CPLX2"/>
</dbReference>
<dbReference type="HPA" id="ENSG00000145920">
    <property type="expression patterns" value="Group enriched (brain, epididymis)"/>
</dbReference>
<dbReference type="MIM" id="605033">
    <property type="type" value="gene"/>
</dbReference>
<dbReference type="neXtProt" id="NX_Q6PUV4"/>
<dbReference type="OpenTargets" id="ENSG00000145920"/>
<dbReference type="PharmGKB" id="PA26827"/>
<dbReference type="VEuPathDB" id="HostDB:ENSG00000145920"/>
<dbReference type="eggNOG" id="ENOG502RXXI">
    <property type="taxonomic scope" value="Eukaryota"/>
</dbReference>
<dbReference type="GeneTree" id="ENSGT00950000182938"/>
<dbReference type="HOGENOM" id="CLU_132159_1_0_1"/>
<dbReference type="InParanoid" id="Q6PUV4"/>
<dbReference type="OMA" id="AKMILGN"/>
<dbReference type="PAN-GO" id="Q6PUV4">
    <property type="GO annotations" value="5 GO annotations based on evolutionary models"/>
</dbReference>
<dbReference type="PhylomeDB" id="Q6PUV4"/>
<dbReference type="TreeFam" id="TF315172"/>
<dbReference type="PathwayCommons" id="Q6PUV4"/>
<dbReference type="SignaLink" id="Q6PUV4"/>
<dbReference type="BioGRID-ORCS" id="10814">
    <property type="hits" value="21 hits in 1143 CRISPR screens"/>
</dbReference>
<dbReference type="ChiTaRS" id="CPLX2">
    <property type="organism name" value="human"/>
</dbReference>
<dbReference type="GeneWiki" id="CPLX2"/>
<dbReference type="GenomeRNAi" id="10814"/>
<dbReference type="Pharos" id="Q6PUV4">
    <property type="development level" value="Tbio"/>
</dbReference>
<dbReference type="PRO" id="PR:Q6PUV4"/>
<dbReference type="Proteomes" id="UP000005640">
    <property type="component" value="Chromosome 5"/>
</dbReference>
<dbReference type="RNAct" id="Q6PUV4">
    <property type="molecule type" value="protein"/>
</dbReference>
<dbReference type="Bgee" id="ENSG00000145920">
    <property type="expression patterns" value="Expressed in right hemisphere of cerebellum and 135 other cell types or tissues"/>
</dbReference>
<dbReference type="ExpressionAtlas" id="Q6PUV4">
    <property type="expression patterns" value="baseline and differential"/>
</dbReference>
<dbReference type="GO" id="GO:0044305">
    <property type="term" value="C:calyx of Held"/>
    <property type="evidence" value="ECO:0007669"/>
    <property type="project" value="Ensembl"/>
</dbReference>
<dbReference type="GO" id="GO:0005829">
    <property type="term" value="C:cytosol"/>
    <property type="evidence" value="ECO:0007669"/>
    <property type="project" value="UniProtKB-SubCell"/>
</dbReference>
<dbReference type="GO" id="GO:0030425">
    <property type="term" value="C:dendrite"/>
    <property type="evidence" value="ECO:0007669"/>
    <property type="project" value="Ensembl"/>
</dbReference>
<dbReference type="GO" id="GO:0098978">
    <property type="term" value="C:glutamatergic synapse"/>
    <property type="evidence" value="ECO:0007669"/>
    <property type="project" value="Ensembl"/>
</dbReference>
<dbReference type="GO" id="GO:0005634">
    <property type="term" value="C:nucleus"/>
    <property type="evidence" value="ECO:0007669"/>
    <property type="project" value="UniProtKB-SubCell"/>
</dbReference>
<dbReference type="GO" id="GO:0043204">
    <property type="term" value="C:perikaryon"/>
    <property type="evidence" value="ECO:0007669"/>
    <property type="project" value="UniProtKB-SubCell"/>
</dbReference>
<dbReference type="GO" id="GO:0098794">
    <property type="term" value="C:postsynapse"/>
    <property type="evidence" value="ECO:0007669"/>
    <property type="project" value="Ensembl"/>
</dbReference>
<dbReference type="GO" id="GO:0031201">
    <property type="term" value="C:SNARE complex"/>
    <property type="evidence" value="ECO:0000318"/>
    <property type="project" value="GO_Central"/>
</dbReference>
<dbReference type="GO" id="GO:0070033">
    <property type="term" value="C:synaptobrevin 2-SNAP-25-syntaxin-1a-complexin II complex"/>
    <property type="evidence" value="ECO:0007669"/>
    <property type="project" value="Ensembl"/>
</dbReference>
<dbReference type="GO" id="GO:0070554">
    <property type="term" value="C:synaptobrevin 2-SNAP-25-syntaxin-3-complexin complex"/>
    <property type="evidence" value="ECO:0000304"/>
    <property type="project" value="ParkinsonsUK-UCL"/>
</dbReference>
<dbReference type="GO" id="GO:0043195">
    <property type="term" value="C:terminal bouton"/>
    <property type="evidence" value="ECO:0000318"/>
    <property type="project" value="GO_Central"/>
</dbReference>
<dbReference type="GO" id="GO:0048306">
    <property type="term" value="F:calcium-dependent protein binding"/>
    <property type="evidence" value="ECO:0007669"/>
    <property type="project" value="Ensembl"/>
</dbReference>
<dbReference type="GO" id="GO:0000149">
    <property type="term" value="F:SNARE binding"/>
    <property type="evidence" value="ECO:0000318"/>
    <property type="project" value="GO_Central"/>
</dbReference>
<dbReference type="GO" id="GO:0017075">
    <property type="term" value="F:syntaxin-1 binding"/>
    <property type="evidence" value="ECO:0007669"/>
    <property type="project" value="Ensembl"/>
</dbReference>
<dbReference type="GO" id="GO:0030154">
    <property type="term" value="P:cell differentiation"/>
    <property type="evidence" value="ECO:0007669"/>
    <property type="project" value="UniProtKB-KW"/>
</dbReference>
<dbReference type="GO" id="GO:0043303">
    <property type="term" value="P:mast cell degranulation"/>
    <property type="evidence" value="ECO:0007669"/>
    <property type="project" value="UniProtKB-KW"/>
</dbReference>
<dbReference type="GO" id="GO:0050804">
    <property type="term" value="P:modulation of chemical synaptic transmission"/>
    <property type="evidence" value="ECO:0000318"/>
    <property type="project" value="GO_Central"/>
</dbReference>
<dbReference type="GO" id="GO:0007399">
    <property type="term" value="P:nervous system development"/>
    <property type="evidence" value="ECO:0007669"/>
    <property type="project" value="UniProtKB-KW"/>
</dbReference>
<dbReference type="GO" id="GO:0031915">
    <property type="term" value="P:positive regulation of synaptic plasticity"/>
    <property type="evidence" value="ECO:0000250"/>
    <property type="project" value="UniProtKB"/>
</dbReference>
<dbReference type="GO" id="GO:0017157">
    <property type="term" value="P:regulation of exocytosis"/>
    <property type="evidence" value="ECO:0000304"/>
    <property type="project" value="ParkinsonsUK-UCL"/>
</dbReference>
<dbReference type="GO" id="GO:0031630">
    <property type="term" value="P:regulation of synaptic vesicle fusion to presynaptic active zone membrane"/>
    <property type="evidence" value="ECO:0000318"/>
    <property type="project" value="GO_Central"/>
</dbReference>
<dbReference type="GO" id="GO:0016079">
    <property type="term" value="P:synaptic vesicle exocytosis"/>
    <property type="evidence" value="ECO:0000318"/>
    <property type="project" value="GO_Central"/>
</dbReference>
<dbReference type="GO" id="GO:0006904">
    <property type="term" value="P:vesicle docking involved in exocytosis"/>
    <property type="evidence" value="ECO:0000304"/>
    <property type="project" value="ProtInc"/>
</dbReference>
<dbReference type="CDD" id="cd22808">
    <property type="entry name" value="Complexin_NTD_CPLX_I_II"/>
    <property type="match status" value="1"/>
</dbReference>
<dbReference type="FunFam" id="1.20.5.580:FF:000001">
    <property type="entry name" value="Complexin 2"/>
    <property type="match status" value="1"/>
</dbReference>
<dbReference type="Gene3D" id="1.20.5.580">
    <property type="entry name" value="Single Helix bin"/>
    <property type="match status" value="1"/>
</dbReference>
<dbReference type="InterPro" id="IPR008849">
    <property type="entry name" value="Synaphin"/>
</dbReference>
<dbReference type="PANTHER" id="PTHR16705">
    <property type="entry name" value="COMPLEXIN"/>
    <property type="match status" value="1"/>
</dbReference>
<dbReference type="PANTHER" id="PTHR16705:SF9">
    <property type="entry name" value="COMPLEXIN-2"/>
    <property type="match status" value="1"/>
</dbReference>
<dbReference type="Pfam" id="PF05835">
    <property type="entry name" value="Synaphin"/>
    <property type="match status" value="1"/>
</dbReference>
<dbReference type="SUPFAM" id="SSF58038">
    <property type="entry name" value="SNARE fusion complex"/>
    <property type="match status" value="1"/>
</dbReference>
<organism>
    <name type="scientific">Homo sapiens</name>
    <name type="common">Human</name>
    <dbReference type="NCBI Taxonomy" id="9606"/>
    <lineage>
        <taxon>Eukaryota</taxon>
        <taxon>Metazoa</taxon>
        <taxon>Chordata</taxon>
        <taxon>Craniata</taxon>
        <taxon>Vertebrata</taxon>
        <taxon>Euteleostomi</taxon>
        <taxon>Mammalia</taxon>
        <taxon>Eutheria</taxon>
        <taxon>Euarchontoglires</taxon>
        <taxon>Primates</taxon>
        <taxon>Haplorrhini</taxon>
        <taxon>Catarrhini</taxon>
        <taxon>Hominidae</taxon>
        <taxon>Homo</taxon>
    </lineage>
</organism>
<protein>
    <recommendedName>
        <fullName>Complexin-2</fullName>
    </recommendedName>
    <alternativeName>
        <fullName>Complexin II</fullName>
        <shortName>CPX II</shortName>
    </alternativeName>
    <alternativeName>
        <fullName>Synaphin-1</fullName>
    </alternativeName>
</protein>
<proteinExistence type="evidence at protein level"/>
<comment type="function">
    <text evidence="2 4">Negatively regulates the formation of synaptic vesicle clustering at active zone to the presynaptic membrane in postmitotic neurons. Positively regulates a late step in exocytosis of various cytoplasmic vesicles, such as synaptic vesicles and other secretory vesicles. Also involved in mast cell exocytosis (By similarity).</text>
</comment>
<comment type="subunit">
    <text evidence="1">Binds to the SNARE core complex containing SNAP25, VAMP2 and STX1A.</text>
</comment>
<comment type="interaction">
    <interactant intactId="EBI-2689453">
        <id>Q6PUV4</id>
    </interactant>
    <interactant intactId="EBI-709754">
        <id>Q9HB07</id>
        <label>MYG1</label>
    </interactant>
    <organismsDiffer>false</organismsDiffer>
    <experiments>3</experiments>
</comment>
<comment type="interaction">
    <interactant intactId="EBI-2689453">
        <id>Q6PUV4</id>
    </interactant>
    <interactant intactId="EBI-11978907">
        <id>Q9ULP0-2</id>
        <label>NDRG4</label>
    </interactant>
    <organismsDiffer>false</organismsDiffer>
    <experiments>3</experiments>
</comment>
<comment type="interaction">
    <interactant intactId="EBI-2689453">
        <id>Q6PUV4</id>
    </interactant>
    <interactant intactId="EBI-741171">
        <id>Q96AL5</id>
        <label>PBX3</label>
    </interactant>
    <organismsDiffer>false</organismsDiffer>
    <experiments>3</experiments>
</comment>
<comment type="interaction">
    <interactant intactId="EBI-2689453">
        <id>Q6PUV4</id>
    </interactant>
    <interactant intactId="EBI-1049298">
        <id>P43897</id>
        <label>TSFM</label>
    </interactant>
    <organismsDiffer>false</organismsDiffer>
    <experiments>3</experiments>
</comment>
<comment type="subcellular location">
    <subcellularLocation>
        <location evidence="3">Cytoplasm</location>
        <location evidence="3">Cytosol</location>
    </subcellularLocation>
    <subcellularLocation>
        <location evidence="3">Presynapse</location>
    </subcellularLocation>
    <subcellularLocation>
        <location evidence="3">Nucleus</location>
    </subcellularLocation>
    <subcellularLocation>
        <location evidence="3">Perikaryon</location>
    </subcellularLocation>
    <text evidence="3">Translocated from the perikaryon to the presynaptic terminals during maturation of neuronal cells. In mast cells, cytosol and nucleus. Becomes enriched near plasma membrane following stimulation.</text>
</comment>
<comment type="tissue specificity">
    <text evidence="7 8 9 10 11">Nervous system. In hippocampus and cerebellum, expressed mainly by excitatory neurons. Down-regulated in brain cortex from patients suffering from Huntington disease, bipolar disorder or major depression. Down-regulated in cerebellum from patients with schizophrenia.</text>
</comment>
<comment type="similarity">
    <text evidence="12">Belongs to the complexin/synaphin family.</text>
</comment>
<feature type="chain" id="PRO_0000144875" description="Complexin-2">
    <location>
        <begin position="1"/>
        <end position="134"/>
    </location>
</feature>
<feature type="region of interest" description="Disordered" evidence="6">
    <location>
        <begin position="1"/>
        <end position="114"/>
    </location>
</feature>
<feature type="region of interest" description="Interaction with the SNARE complex" evidence="1">
    <location>
        <begin position="41"/>
        <end position="97"/>
    </location>
</feature>
<feature type="coiled-coil region" evidence="5">
    <location>
        <begin position="28"/>
        <end position="84"/>
    </location>
</feature>
<feature type="compositionally biased region" description="Basic and acidic residues" evidence="6">
    <location>
        <begin position="15"/>
        <end position="85"/>
    </location>
</feature>
<feature type="modified residue" description="Phosphoserine" evidence="3">
    <location>
        <position position="93"/>
    </location>
</feature>
<reference key="1">
    <citation type="journal article" date="1995" name="Cell">
        <title>Complexins: cytosolic proteins that regulate SNAP receptor function.</title>
        <authorList>
            <person name="McMahon H.T."/>
            <person name="Missler M."/>
            <person name="Li C."/>
            <person name="Suedhof T.C."/>
        </authorList>
    </citation>
    <scope>NUCLEOTIDE SEQUENCE [MRNA]</scope>
    <source>
        <tissue>Brain</tissue>
    </source>
</reference>
<reference key="2">
    <citation type="journal article" date="2004" name="Nat. Genet.">
        <title>Complete sequencing and characterization of 21,243 full-length human cDNAs.</title>
        <authorList>
            <person name="Ota T."/>
            <person name="Suzuki Y."/>
            <person name="Nishikawa T."/>
            <person name="Otsuki T."/>
            <person name="Sugiyama T."/>
            <person name="Irie R."/>
            <person name="Wakamatsu A."/>
            <person name="Hayashi K."/>
            <person name="Sato H."/>
            <person name="Nagai K."/>
            <person name="Kimura K."/>
            <person name="Makita H."/>
            <person name="Sekine M."/>
            <person name="Obayashi M."/>
            <person name="Nishi T."/>
            <person name="Shibahara T."/>
            <person name="Tanaka T."/>
            <person name="Ishii S."/>
            <person name="Yamamoto J."/>
            <person name="Saito K."/>
            <person name="Kawai Y."/>
            <person name="Isono Y."/>
            <person name="Nakamura Y."/>
            <person name="Nagahari K."/>
            <person name="Murakami K."/>
            <person name="Yasuda T."/>
            <person name="Iwayanagi T."/>
            <person name="Wagatsuma M."/>
            <person name="Shiratori A."/>
            <person name="Sudo H."/>
            <person name="Hosoiri T."/>
            <person name="Kaku Y."/>
            <person name="Kodaira H."/>
            <person name="Kondo H."/>
            <person name="Sugawara M."/>
            <person name="Takahashi M."/>
            <person name="Kanda K."/>
            <person name="Yokoi T."/>
            <person name="Furuya T."/>
            <person name="Kikkawa E."/>
            <person name="Omura Y."/>
            <person name="Abe K."/>
            <person name="Kamihara K."/>
            <person name="Katsuta N."/>
            <person name="Sato K."/>
            <person name="Tanikawa M."/>
            <person name="Yamazaki M."/>
            <person name="Ninomiya K."/>
            <person name="Ishibashi T."/>
            <person name="Yamashita H."/>
            <person name="Murakawa K."/>
            <person name="Fujimori K."/>
            <person name="Tanai H."/>
            <person name="Kimata M."/>
            <person name="Watanabe M."/>
            <person name="Hiraoka S."/>
            <person name="Chiba Y."/>
            <person name="Ishida S."/>
            <person name="Ono Y."/>
            <person name="Takiguchi S."/>
            <person name="Watanabe S."/>
            <person name="Yosida M."/>
            <person name="Hotuta T."/>
            <person name="Kusano J."/>
            <person name="Kanehori K."/>
            <person name="Takahashi-Fujii A."/>
            <person name="Hara H."/>
            <person name="Tanase T.-O."/>
            <person name="Nomura Y."/>
            <person name="Togiya S."/>
            <person name="Komai F."/>
            <person name="Hara R."/>
            <person name="Takeuchi K."/>
            <person name="Arita M."/>
            <person name="Imose N."/>
            <person name="Musashino K."/>
            <person name="Yuuki H."/>
            <person name="Oshima A."/>
            <person name="Sasaki N."/>
            <person name="Aotsuka S."/>
            <person name="Yoshikawa Y."/>
            <person name="Matsunawa H."/>
            <person name="Ichihara T."/>
            <person name="Shiohata N."/>
            <person name="Sano S."/>
            <person name="Moriya S."/>
            <person name="Momiyama H."/>
            <person name="Satoh N."/>
            <person name="Takami S."/>
            <person name="Terashima Y."/>
            <person name="Suzuki O."/>
            <person name="Nakagawa S."/>
            <person name="Senoh A."/>
            <person name="Mizoguchi H."/>
            <person name="Goto Y."/>
            <person name="Shimizu F."/>
            <person name="Wakebe H."/>
            <person name="Hishigaki H."/>
            <person name="Watanabe T."/>
            <person name="Sugiyama A."/>
            <person name="Takemoto M."/>
            <person name="Kawakami B."/>
            <person name="Yamazaki M."/>
            <person name="Watanabe K."/>
            <person name="Kumagai A."/>
            <person name="Itakura S."/>
            <person name="Fukuzumi Y."/>
            <person name="Fujimori Y."/>
            <person name="Komiyama M."/>
            <person name="Tashiro H."/>
            <person name="Tanigami A."/>
            <person name="Fujiwara T."/>
            <person name="Ono T."/>
            <person name="Yamada K."/>
            <person name="Fujii Y."/>
            <person name="Ozaki K."/>
            <person name="Hirao M."/>
            <person name="Ohmori Y."/>
            <person name="Kawabata A."/>
            <person name="Hikiji T."/>
            <person name="Kobatake N."/>
            <person name="Inagaki H."/>
            <person name="Ikema Y."/>
            <person name="Okamoto S."/>
            <person name="Okitani R."/>
            <person name="Kawakami T."/>
            <person name="Noguchi S."/>
            <person name="Itoh T."/>
            <person name="Shigeta K."/>
            <person name="Senba T."/>
            <person name="Matsumura K."/>
            <person name="Nakajima Y."/>
            <person name="Mizuno T."/>
            <person name="Morinaga M."/>
            <person name="Sasaki M."/>
            <person name="Togashi T."/>
            <person name="Oyama M."/>
            <person name="Hata H."/>
            <person name="Watanabe M."/>
            <person name="Komatsu T."/>
            <person name="Mizushima-Sugano J."/>
            <person name="Satoh T."/>
            <person name="Shirai Y."/>
            <person name="Takahashi Y."/>
            <person name="Nakagawa K."/>
            <person name="Okumura K."/>
            <person name="Nagase T."/>
            <person name="Nomura N."/>
            <person name="Kikuchi H."/>
            <person name="Masuho Y."/>
            <person name="Yamashita R."/>
            <person name="Nakai K."/>
            <person name="Yada T."/>
            <person name="Nakamura Y."/>
            <person name="Ohara O."/>
            <person name="Isogai T."/>
            <person name="Sugano S."/>
        </authorList>
    </citation>
    <scope>NUCLEOTIDE SEQUENCE [LARGE SCALE MRNA]</scope>
    <source>
        <tissue>Cerebellum</tissue>
    </source>
</reference>
<reference key="3">
    <citation type="journal article" date="2004" name="Genome Res.">
        <title>The status, quality, and expansion of the NIH full-length cDNA project: the Mammalian Gene Collection (MGC).</title>
        <authorList>
            <consortium name="The MGC Project Team"/>
        </authorList>
    </citation>
    <scope>NUCLEOTIDE SEQUENCE [LARGE SCALE MRNA]</scope>
    <source>
        <tissue>Brain</tissue>
    </source>
</reference>
<reference key="4">
    <citation type="journal article" date="2005" name="Gene">
        <title>Structural organization of the human complexin 2 gene (CPLX2) and aspects of its functional activity.</title>
        <authorList>
            <person name="Raevskaya N.M."/>
            <person name="Dergunova L.V."/>
            <person name="Vladychenskaya I.P."/>
            <person name="Stavchansky V.V."/>
            <person name="Oborina M.V."/>
            <person name="Poltaraus A.B."/>
            <person name="Limborska S.A."/>
        </authorList>
    </citation>
    <scope>NUCLEOTIDE SEQUENCE [MRNA] OF 1-114</scope>
    <scope>TISSUE SPECIFICITY</scope>
    <source>
        <tissue>Cerebellum</tissue>
    </source>
</reference>
<reference key="5">
    <citation type="journal article" date="1998" name="Lancet">
        <title>Preferential involvement of excitatory neurons in medial temporal lobe in schizophrenia.</title>
        <authorList>
            <person name="Harrison P.J."/>
            <person name="Eastwood S.L."/>
        </authorList>
    </citation>
    <scope>TISSUE SPECIFICITY</scope>
</reference>
<reference key="6">
    <citation type="journal article" date="2001" name="Brain Res. Bull.">
        <title>Synaptic pathology in the anterior cingulate cortex in schizophrenia and mood disorders. A review and a Western blot study of synaptophysin, GAP-43 and the complexins.</title>
        <authorList>
            <person name="Eastwood S.L."/>
            <person name="Harrison P.J."/>
        </authorList>
    </citation>
    <scope>TISSUE SPECIFICITY</scope>
</reference>
<reference key="7">
    <citation type="journal article" date="2001" name="Neuroscience">
        <title>Cerebellar synaptic protein expression in schizophrenia.</title>
        <authorList>
            <person name="Eastwood S.L."/>
            <person name="Cotter D."/>
            <person name="Harrison P.J."/>
        </authorList>
    </citation>
    <scope>TISSUE SPECIFICITY</scope>
</reference>
<reference key="8">
    <citation type="journal article" date="2004" name="J. Neurocytol.">
        <title>Early changes in Huntington's disease patient brains involve alterations in cytoskeletal and synaptic elements.</title>
        <authorList>
            <person name="DiProspero N.A."/>
            <person name="Chen E.-Y."/>
            <person name="Charles V."/>
            <person name="Plomann M."/>
            <person name="Kordower J.H."/>
            <person name="Tagle D.A."/>
        </authorList>
    </citation>
    <scope>TISSUE SPECIFICITY</scope>
</reference>
<name>CPLX2_HUMAN</name>
<gene>
    <name type="primary">CPLX2</name>
</gene>
<evidence type="ECO:0000250" key="1"/>
<evidence type="ECO:0000250" key="2">
    <source>
        <dbReference type="UniProtKB" id="P84086"/>
    </source>
</evidence>
<evidence type="ECO:0000250" key="3">
    <source>
        <dbReference type="UniProtKB" id="P84087"/>
    </source>
</evidence>
<evidence type="ECO:0000250" key="4">
    <source>
        <dbReference type="UniProtKB" id="P84088"/>
    </source>
</evidence>
<evidence type="ECO:0000255" key="5"/>
<evidence type="ECO:0000256" key="6">
    <source>
        <dbReference type="SAM" id="MobiDB-lite"/>
    </source>
</evidence>
<evidence type="ECO:0000269" key="7">
    <source>
    </source>
</evidence>
<evidence type="ECO:0000269" key="8">
    <source>
    </source>
</evidence>
<evidence type="ECO:0000269" key="9">
    <source>
    </source>
</evidence>
<evidence type="ECO:0000269" key="10">
    <source>
    </source>
</evidence>
<evidence type="ECO:0000269" key="11">
    <source>
    </source>
</evidence>
<evidence type="ECO:0000305" key="12"/>